<reference key="1">
    <citation type="journal article" date="2010" name="Environ. Microbiol.">
        <title>The genome of Syntrophomonas wolfei: new insights into syntrophic metabolism and biohydrogen production.</title>
        <authorList>
            <person name="Sieber J.R."/>
            <person name="Sims D.R."/>
            <person name="Han C."/>
            <person name="Kim E."/>
            <person name="Lykidis A."/>
            <person name="Lapidus A.L."/>
            <person name="McDonnald E."/>
            <person name="Rohlin L."/>
            <person name="Culley D.E."/>
            <person name="Gunsalus R."/>
            <person name="McInerney M.J."/>
        </authorList>
    </citation>
    <scope>NUCLEOTIDE SEQUENCE [LARGE SCALE GENOMIC DNA]</scope>
    <source>
        <strain>DSM 2245B / Goettingen</strain>
    </source>
</reference>
<accession>Q0AYL3</accession>
<sequence length="352" mass="38352">MPRKKVLVVDDSAFMRKMIGDMINSDDELEIVGKAGNGQEALEKIRELQPDVVVMDIEMPVLDGLSTLSRIMESQALPVIIFSSLSQKGTEQTLKALQLGAVDFIAKPSGQISLDVLSVKEELIKKLKVAANTSRKLPVYQSLHEPVVKAKKSLPDQDRKLNKLVVIAASTGGPKALHQVIPRFPAGIDAAILVVQHMPPGFTRSLAERLDSLSELRVKEAEHGEKVLPACVYIAPGDYHLKAKSRLKGTENELYIELDQSKPRGGLRPAADIMLKSVAKQFWSHIVCVIMTGMGNDGAAALPCIKEKKGRIIAEHQSTCVVYGMPKAAVETGLVDKIVPLSEITEEVLSML</sequence>
<keyword id="KW-0145">Chemotaxis</keyword>
<keyword id="KW-0963">Cytoplasm</keyword>
<keyword id="KW-0378">Hydrolase</keyword>
<keyword id="KW-0597">Phosphoprotein</keyword>
<keyword id="KW-1185">Reference proteome</keyword>
<evidence type="ECO:0000255" key="1">
    <source>
        <dbReference type="HAMAP-Rule" id="MF_00099"/>
    </source>
</evidence>
<gene>
    <name evidence="1" type="primary">cheB1</name>
    <name type="ordered locus">Swol_0873</name>
</gene>
<feature type="chain" id="PRO_0000264325" description="Protein-glutamate methylesterase/protein-glutamine glutaminase 1">
    <location>
        <begin position="1"/>
        <end position="352"/>
    </location>
</feature>
<feature type="domain" description="Response regulatory" evidence="1">
    <location>
        <begin position="5"/>
        <end position="122"/>
    </location>
</feature>
<feature type="domain" description="CheB-type methylesterase" evidence="1">
    <location>
        <begin position="155"/>
        <end position="352"/>
    </location>
</feature>
<feature type="active site" evidence="1">
    <location>
        <position position="170"/>
    </location>
</feature>
<feature type="active site" evidence="1">
    <location>
        <position position="197"/>
    </location>
</feature>
<feature type="active site" evidence="1">
    <location>
        <position position="297"/>
    </location>
</feature>
<feature type="modified residue" description="4-aspartylphosphate" evidence="1">
    <location>
        <position position="56"/>
    </location>
</feature>
<protein>
    <recommendedName>
        <fullName evidence="1">Protein-glutamate methylesterase/protein-glutamine glutaminase 1</fullName>
        <ecNumber evidence="1">3.1.1.61</ecNumber>
        <ecNumber evidence="1">3.5.1.44</ecNumber>
    </recommendedName>
</protein>
<dbReference type="EC" id="3.1.1.61" evidence="1"/>
<dbReference type="EC" id="3.5.1.44" evidence="1"/>
<dbReference type="EMBL" id="CP000448">
    <property type="protein sequence ID" value="ABI68191.1"/>
    <property type="molecule type" value="Genomic_DNA"/>
</dbReference>
<dbReference type="RefSeq" id="WP_011640296.1">
    <property type="nucleotide sequence ID" value="NC_008346.1"/>
</dbReference>
<dbReference type="SMR" id="Q0AYL3"/>
<dbReference type="STRING" id="335541.Swol_0873"/>
<dbReference type="KEGG" id="swo:Swol_0873"/>
<dbReference type="eggNOG" id="COG2201">
    <property type="taxonomic scope" value="Bacteria"/>
</dbReference>
<dbReference type="HOGENOM" id="CLU_000445_51_0_9"/>
<dbReference type="OrthoDB" id="9793421at2"/>
<dbReference type="Proteomes" id="UP000001968">
    <property type="component" value="Chromosome"/>
</dbReference>
<dbReference type="GO" id="GO:0005737">
    <property type="term" value="C:cytoplasm"/>
    <property type="evidence" value="ECO:0007669"/>
    <property type="project" value="UniProtKB-SubCell"/>
</dbReference>
<dbReference type="GO" id="GO:0000156">
    <property type="term" value="F:phosphorelay response regulator activity"/>
    <property type="evidence" value="ECO:0007669"/>
    <property type="project" value="InterPro"/>
</dbReference>
<dbReference type="GO" id="GO:0008984">
    <property type="term" value="F:protein-glutamate methylesterase activity"/>
    <property type="evidence" value="ECO:0007669"/>
    <property type="project" value="UniProtKB-UniRule"/>
</dbReference>
<dbReference type="GO" id="GO:0050568">
    <property type="term" value="F:protein-glutamine glutaminase activity"/>
    <property type="evidence" value="ECO:0007669"/>
    <property type="project" value="UniProtKB-UniRule"/>
</dbReference>
<dbReference type="GO" id="GO:0006935">
    <property type="term" value="P:chemotaxis"/>
    <property type="evidence" value="ECO:0007669"/>
    <property type="project" value="UniProtKB-UniRule"/>
</dbReference>
<dbReference type="CDD" id="cd16432">
    <property type="entry name" value="CheB_Rec"/>
    <property type="match status" value="1"/>
</dbReference>
<dbReference type="CDD" id="cd17541">
    <property type="entry name" value="REC_CheB-like"/>
    <property type="match status" value="1"/>
</dbReference>
<dbReference type="Gene3D" id="3.40.50.2300">
    <property type="match status" value="1"/>
</dbReference>
<dbReference type="Gene3D" id="3.40.50.180">
    <property type="entry name" value="Methylesterase CheB, C-terminal domain"/>
    <property type="match status" value="1"/>
</dbReference>
<dbReference type="HAMAP" id="MF_00099">
    <property type="entry name" value="CheB_chemtxs"/>
    <property type="match status" value="1"/>
</dbReference>
<dbReference type="InterPro" id="IPR008248">
    <property type="entry name" value="CheB-like"/>
</dbReference>
<dbReference type="InterPro" id="IPR035909">
    <property type="entry name" value="CheB_C"/>
</dbReference>
<dbReference type="InterPro" id="IPR011006">
    <property type="entry name" value="CheY-like_superfamily"/>
</dbReference>
<dbReference type="InterPro" id="IPR000673">
    <property type="entry name" value="Sig_transdc_resp-reg_Me-estase"/>
</dbReference>
<dbReference type="InterPro" id="IPR001789">
    <property type="entry name" value="Sig_transdc_resp-reg_receiver"/>
</dbReference>
<dbReference type="NCBIfam" id="NF001965">
    <property type="entry name" value="PRK00742.1"/>
    <property type="match status" value="1"/>
</dbReference>
<dbReference type="PANTHER" id="PTHR42872">
    <property type="entry name" value="PROTEIN-GLUTAMATE METHYLESTERASE/PROTEIN-GLUTAMINE GLUTAMINASE"/>
    <property type="match status" value="1"/>
</dbReference>
<dbReference type="PANTHER" id="PTHR42872:SF6">
    <property type="entry name" value="PROTEIN-GLUTAMATE METHYLESTERASE_PROTEIN-GLUTAMINE GLUTAMINASE"/>
    <property type="match status" value="1"/>
</dbReference>
<dbReference type="Pfam" id="PF01339">
    <property type="entry name" value="CheB_methylest"/>
    <property type="match status" value="1"/>
</dbReference>
<dbReference type="Pfam" id="PF00072">
    <property type="entry name" value="Response_reg"/>
    <property type="match status" value="1"/>
</dbReference>
<dbReference type="PIRSF" id="PIRSF000876">
    <property type="entry name" value="RR_chemtxs_CheB"/>
    <property type="match status" value="1"/>
</dbReference>
<dbReference type="SMART" id="SM00448">
    <property type="entry name" value="REC"/>
    <property type="match status" value="1"/>
</dbReference>
<dbReference type="SUPFAM" id="SSF52172">
    <property type="entry name" value="CheY-like"/>
    <property type="match status" value="1"/>
</dbReference>
<dbReference type="SUPFAM" id="SSF52738">
    <property type="entry name" value="Methylesterase CheB, C-terminal domain"/>
    <property type="match status" value="1"/>
</dbReference>
<dbReference type="PROSITE" id="PS50122">
    <property type="entry name" value="CHEB"/>
    <property type="match status" value="1"/>
</dbReference>
<dbReference type="PROSITE" id="PS50110">
    <property type="entry name" value="RESPONSE_REGULATORY"/>
    <property type="match status" value="1"/>
</dbReference>
<comment type="function">
    <text evidence="1">Involved in chemotaxis. Part of a chemotaxis signal transduction system that modulates chemotaxis in response to various stimuli. Catalyzes the demethylation of specific methylglutamate residues introduced into the chemoreceptors (methyl-accepting chemotaxis proteins or MCP) by CheR. Also mediates the irreversible deamidation of specific glutamine residues to glutamic acid.</text>
</comment>
<comment type="catalytic activity">
    <reaction evidence="1">
        <text>[protein]-L-glutamate 5-O-methyl ester + H2O = L-glutamyl-[protein] + methanol + H(+)</text>
        <dbReference type="Rhea" id="RHEA:23236"/>
        <dbReference type="Rhea" id="RHEA-COMP:10208"/>
        <dbReference type="Rhea" id="RHEA-COMP:10311"/>
        <dbReference type="ChEBI" id="CHEBI:15377"/>
        <dbReference type="ChEBI" id="CHEBI:15378"/>
        <dbReference type="ChEBI" id="CHEBI:17790"/>
        <dbReference type="ChEBI" id="CHEBI:29973"/>
        <dbReference type="ChEBI" id="CHEBI:82795"/>
        <dbReference type="EC" id="3.1.1.61"/>
    </reaction>
</comment>
<comment type="catalytic activity">
    <reaction evidence="1">
        <text>L-glutaminyl-[protein] + H2O = L-glutamyl-[protein] + NH4(+)</text>
        <dbReference type="Rhea" id="RHEA:16441"/>
        <dbReference type="Rhea" id="RHEA-COMP:10207"/>
        <dbReference type="Rhea" id="RHEA-COMP:10208"/>
        <dbReference type="ChEBI" id="CHEBI:15377"/>
        <dbReference type="ChEBI" id="CHEBI:28938"/>
        <dbReference type="ChEBI" id="CHEBI:29973"/>
        <dbReference type="ChEBI" id="CHEBI:30011"/>
        <dbReference type="EC" id="3.5.1.44"/>
    </reaction>
</comment>
<comment type="subcellular location">
    <subcellularLocation>
        <location evidence="1">Cytoplasm</location>
    </subcellularLocation>
</comment>
<comment type="domain">
    <text evidence="1">Contains a C-terminal catalytic domain, and an N-terminal region which modulates catalytic activity.</text>
</comment>
<comment type="PTM">
    <text evidence="1">Phosphorylated by CheA. Phosphorylation of the N-terminal regulatory domain activates the methylesterase activity.</text>
</comment>
<comment type="similarity">
    <text evidence="1">Belongs to the CheB family.</text>
</comment>
<proteinExistence type="inferred from homology"/>
<name>CHEB1_SYNWW</name>
<organism>
    <name type="scientific">Syntrophomonas wolfei subsp. wolfei (strain DSM 2245B / Goettingen)</name>
    <dbReference type="NCBI Taxonomy" id="335541"/>
    <lineage>
        <taxon>Bacteria</taxon>
        <taxon>Bacillati</taxon>
        <taxon>Bacillota</taxon>
        <taxon>Clostridia</taxon>
        <taxon>Eubacteriales</taxon>
        <taxon>Syntrophomonadaceae</taxon>
        <taxon>Syntrophomonas</taxon>
    </lineage>
</organism>